<geneLocation type="chloroplast"/>
<organism>
    <name type="scientific">Adiantum capillus-veneris</name>
    <name type="common">Maidenhair fern</name>
    <dbReference type="NCBI Taxonomy" id="13818"/>
    <lineage>
        <taxon>Eukaryota</taxon>
        <taxon>Viridiplantae</taxon>
        <taxon>Streptophyta</taxon>
        <taxon>Embryophyta</taxon>
        <taxon>Tracheophyta</taxon>
        <taxon>Polypodiopsida</taxon>
        <taxon>Polypodiidae</taxon>
        <taxon>Polypodiales</taxon>
        <taxon>Pteridineae</taxon>
        <taxon>Pteridaceae</taxon>
        <taxon>Vittarioideae</taxon>
        <taxon>Adiantum</taxon>
    </lineage>
</organism>
<reference key="1">
    <citation type="journal article" date="2003" name="DNA Res.">
        <title>Complete nucleotide sequence of the chloroplast genome from a leptosporangiate fern, Adiantum capillus-veneris L.</title>
        <authorList>
            <person name="Wolf P.G."/>
            <person name="Rowe C.A."/>
            <person name="Sinclair R.B."/>
            <person name="Hasebe M."/>
        </authorList>
    </citation>
    <scope>NUCLEOTIDE SEQUENCE [LARGE SCALE GENOMIC DNA]</scope>
</reference>
<reference key="2">
    <citation type="journal article" date="1999" name="Mol. Biol. Evol.">
        <title>Molecular phylogenetic analysis among bryophytes and tracheophytes based on combined data of plastid coded genes and the 18S rRNA gene.</title>
        <authorList>
            <person name="Nishiyama T."/>
            <person name="Kato M."/>
        </authorList>
    </citation>
    <scope>NUCLEOTIDE SEQUENCE [GENOMIC DNA] OF 1-586</scope>
</reference>
<reference key="3">
    <citation type="journal article" date="2004" name="Gene">
        <title>High levels of RNA editing in a vascular plant chloroplast genome: analysis of transcripts from the fern Adiantum capillus-veneris.</title>
        <authorList>
            <person name="Wolf P.G."/>
            <person name="Rowe C.A."/>
            <person name="Hasebe M."/>
        </authorList>
    </citation>
    <scope>NUCLEOTIDE SEQUENCE [GENOMIC DNA]</scope>
    <scope>RNA EDITING</scope>
    <source>
        <tissue>Frond</tissue>
    </source>
</reference>
<feature type="chain" id="PRO_0000088599" description="Photosystem I P700 chlorophyll a apoprotein A2">
    <location>
        <begin position="1"/>
        <end position="734"/>
    </location>
</feature>
<feature type="transmembrane region" description="Helical; Name=I" evidence="1">
    <location>
        <begin position="46"/>
        <end position="69"/>
    </location>
</feature>
<feature type="transmembrane region" description="Helical; Name=II" evidence="1">
    <location>
        <begin position="135"/>
        <end position="158"/>
    </location>
</feature>
<feature type="transmembrane region" description="Helical; Name=III" evidence="1">
    <location>
        <begin position="175"/>
        <end position="199"/>
    </location>
</feature>
<feature type="transmembrane region" description="Helical; Name=IV" evidence="1">
    <location>
        <begin position="273"/>
        <end position="291"/>
    </location>
</feature>
<feature type="transmembrane region" description="Helical; Name=V" evidence="1">
    <location>
        <begin position="330"/>
        <end position="353"/>
    </location>
</feature>
<feature type="transmembrane region" description="Helical; Name=VI" evidence="1">
    <location>
        <begin position="369"/>
        <end position="395"/>
    </location>
</feature>
<feature type="transmembrane region" description="Helical; Name=VII" evidence="1">
    <location>
        <begin position="417"/>
        <end position="439"/>
    </location>
</feature>
<feature type="transmembrane region" description="Helical; Name=VIII" evidence="1">
    <location>
        <begin position="517"/>
        <end position="535"/>
    </location>
</feature>
<feature type="transmembrane region" description="Helical; Name=IX" evidence="1">
    <location>
        <begin position="575"/>
        <end position="596"/>
    </location>
</feature>
<feature type="transmembrane region" description="Helical; Name=X" evidence="1">
    <location>
        <begin position="643"/>
        <end position="665"/>
    </location>
</feature>
<feature type="transmembrane region" description="Helical; Name=XI" evidence="1">
    <location>
        <begin position="707"/>
        <end position="727"/>
    </location>
</feature>
<feature type="binding site" evidence="1">
    <location>
        <position position="559"/>
    </location>
    <ligand>
        <name>[4Fe-4S] cluster</name>
        <dbReference type="ChEBI" id="CHEBI:49883"/>
        <note>ligand shared between dimeric partners</note>
    </ligand>
</feature>
<feature type="binding site" evidence="1">
    <location>
        <position position="568"/>
    </location>
    <ligand>
        <name>[4Fe-4S] cluster</name>
        <dbReference type="ChEBI" id="CHEBI:49883"/>
        <note>ligand shared between dimeric partners</note>
    </ligand>
</feature>
<feature type="binding site" description="axial binding residue" evidence="1">
    <location>
        <position position="654"/>
    </location>
    <ligand>
        <name>chlorophyll a</name>
        <dbReference type="ChEBI" id="CHEBI:58416"/>
        <label>B1</label>
    </ligand>
    <ligandPart>
        <name>Mg</name>
        <dbReference type="ChEBI" id="CHEBI:25107"/>
    </ligandPart>
</feature>
<feature type="binding site" description="axial binding residue" evidence="1">
    <location>
        <position position="662"/>
    </location>
    <ligand>
        <name>chlorophyll a</name>
        <dbReference type="ChEBI" id="CHEBI:58416"/>
        <label>B3</label>
    </ligand>
    <ligandPart>
        <name>Mg</name>
        <dbReference type="ChEBI" id="CHEBI:25107"/>
    </ligandPart>
</feature>
<feature type="binding site" evidence="1">
    <location>
        <position position="670"/>
    </location>
    <ligand>
        <name>chlorophyll a</name>
        <dbReference type="ChEBI" id="CHEBI:58416"/>
        <label>B3</label>
    </ligand>
</feature>
<feature type="binding site" evidence="1">
    <location>
        <position position="671"/>
    </location>
    <ligand>
        <name>phylloquinone</name>
        <dbReference type="ChEBI" id="CHEBI:18067"/>
        <label>B</label>
    </ligand>
</feature>
<gene>
    <name evidence="1" type="primary">psaB</name>
</gene>
<evidence type="ECO:0000255" key="1">
    <source>
        <dbReference type="HAMAP-Rule" id="MF_00482"/>
    </source>
</evidence>
<evidence type="ECO:0000269" key="2">
    <source>
    </source>
</evidence>
<proteinExistence type="evidence at transcript level"/>
<name>PSAB_ADICA</name>
<protein>
    <recommendedName>
        <fullName evidence="1">Photosystem I P700 chlorophyll a apoprotein A2</fullName>
        <ecNumber evidence="1">1.97.1.12</ecNumber>
    </recommendedName>
    <alternativeName>
        <fullName evidence="1">PSI-B</fullName>
    </alternativeName>
    <alternativeName>
        <fullName evidence="1">PsaB</fullName>
    </alternativeName>
</protein>
<comment type="function">
    <text>PsaA and PsaB bind P700, the primary electron donor of photosystem I (PSI), as well as the electron acceptors A0, A1 and FX. PSI is a plastocyanin-ferredoxin oxidoreductase, converting photonic excitation into a charge separation, which transfers an electron from the donor P700 chlorophyll pair to the spectroscopically characterized acceptors A0, A1, FX, FA and FB in turn. Oxidized P700 is reduced on the lumenal side of the thylakoid membrane by plastocyanin.</text>
</comment>
<comment type="catalytic activity">
    <reaction evidence="1">
        <text>reduced [plastocyanin] + hnu + oxidized [2Fe-2S]-[ferredoxin] = oxidized [plastocyanin] + reduced [2Fe-2S]-[ferredoxin]</text>
        <dbReference type="Rhea" id="RHEA:30407"/>
        <dbReference type="Rhea" id="RHEA-COMP:10000"/>
        <dbReference type="Rhea" id="RHEA-COMP:10001"/>
        <dbReference type="Rhea" id="RHEA-COMP:10039"/>
        <dbReference type="Rhea" id="RHEA-COMP:10040"/>
        <dbReference type="ChEBI" id="CHEBI:29036"/>
        <dbReference type="ChEBI" id="CHEBI:30212"/>
        <dbReference type="ChEBI" id="CHEBI:33737"/>
        <dbReference type="ChEBI" id="CHEBI:33738"/>
        <dbReference type="ChEBI" id="CHEBI:49552"/>
        <dbReference type="EC" id="1.97.1.12"/>
    </reaction>
</comment>
<comment type="cofactor">
    <text evidence="1">P700 is a chlorophyll a/chlorophyll a' dimer, A0 is one or more chlorophyll a, A1 is one or both phylloquinones and FX is a shared 4Fe-4S iron-sulfur center.</text>
</comment>
<comment type="subunit">
    <text evidence="1">The PsaA/B heterodimer binds the P700 chlorophyll special pair and subsequent electron acceptors. PSI consists of a core antenna complex that captures photons, and an electron transfer chain that converts photonic excitation into a charge separation. The eukaryotic PSI reaction center is composed of at least 11 subunits.</text>
</comment>
<comment type="subcellular location">
    <subcellularLocation>
        <location>Plastid</location>
        <location>Chloroplast thylakoid membrane</location>
        <topology>Multi-pass membrane protein</topology>
    </subcellularLocation>
</comment>
<comment type="RNA editing">
    <location>
        <position position="255" evidence="2"/>
    </location>
</comment>
<comment type="similarity">
    <text evidence="1">Belongs to the PsaA/PsaB family.</text>
</comment>
<accession>Q85FM0</accession>
<accession>Q9TNI9</accession>
<sequence length="734" mass="82280">MVSRFPKFSQGLSQDPTTRRIWFGIATAHDFESHDDTTEERLYQKIFASHFGQLAIIFLWTSGNLFHVAWQGNFETWVQDPLHVRPIAHAIWDPHFGQPAVEAYTRGGSAGPVNIAYSGVYQWWYTIGLRNNEDLYTGAIFLLAVAALFLLASWLHLQPKWKPSISWFKNAESRLNHHLSGLFGVSSLAWTGHLIHVAIPEARGGHVRWNDLLTTAPHPQGLGPFFSGQWSVYSQNPDSNTHLFNSNQGAGTAILTFLGGFHPQTQSLWLTDMAHHHLAIAVVFIIAGHMYRTNFGIGHSMKEILDAHIPPGGKLGRGHRGLYDTVNNSLHFQLGLALAALGVITSLVAQHMYSLPAYAFLAQDYTTQAALYTHHQYIAGFIMAGAFAHGAIFFLRDYDPEQNRDNVLARMLEHKEAIISHLSWASLFLGFHTLGLYVHNDVMLAFGTPEKQILIEPVFAQWIQSAHGKVSYGFDVLLSSVDSPASNAGRGLWLPGWLDAVNSSNNSLFLTIGPGDFLVHHAIALGLHTTTLILVKGALDARGSKLMPDKKEFGYSFPCDGPGRGGTCDISAWDAFYLAVFWMLNTIGWVTFYWHWKHITLWQGNAAQFNESSTYLMGWLRDYLWLNSSQLINGYNPFGMNSLSVWAWMFLFGHLVWATGFMFLISWRGYWQELIETLAWAHERTPLANMIRWKDKPVALSIVQARLVGLAHFSVGYIFTYAAFLIASTSGKFG</sequence>
<dbReference type="EC" id="1.97.1.12" evidence="1"/>
<dbReference type="EMBL" id="AY178864">
    <property type="protein sequence ID" value="AAP29391.2"/>
    <property type="molecule type" value="Genomic_DNA"/>
</dbReference>
<dbReference type="EMBL" id="AB013681">
    <property type="protein sequence ID" value="BAA83457.1"/>
    <property type="status" value="ALT_SEQ"/>
    <property type="molecule type" value="Genomic_DNA"/>
</dbReference>
<dbReference type="RefSeq" id="NP_848059.2">
    <property type="nucleotide sequence ID" value="NC_004766.1"/>
</dbReference>
<dbReference type="SMR" id="Q85FM0"/>
<dbReference type="GeneID" id="807418"/>
<dbReference type="GO" id="GO:0009535">
    <property type="term" value="C:chloroplast thylakoid membrane"/>
    <property type="evidence" value="ECO:0007669"/>
    <property type="project" value="UniProtKB-SubCell"/>
</dbReference>
<dbReference type="GO" id="GO:0009522">
    <property type="term" value="C:photosystem I"/>
    <property type="evidence" value="ECO:0007669"/>
    <property type="project" value="UniProtKB-KW"/>
</dbReference>
<dbReference type="GO" id="GO:0051539">
    <property type="term" value="F:4 iron, 4 sulfur cluster binding"/>
    <property type="evidence" value="ECO:0007669"/>
    <property type="project" value="UniProtKB-KW"/>
</dbReference>
<dbReference type="GO" id="GO:0016168">
    <property type="term" value="F:chlorophyll binding"/>
    <property type="evidence" value="ECO:0007669"/>
    <property type="project" value="UniProtKB-KW"/>
</dbReference>
<dbReference type="GO" id="GO:0009055">
    <property type="term" value="F:electron transfer activity"/>
    <property type="evidence" value="ECO:0007669"/>
    <property type="project" value="UniProtKB-UniRule"/>
</dbReference>
<dbReference type="GO" id="GO:0000287">
    <property type="term" value="F:magnesium ion binding"/>
    <property type="evidence" value="ECO:0007669"/>
    <property type="project" value="UniProtKB-UniRule"/>
</dbReference>
<dbReference type="GO" id="GO:0016491">
    <property type="term" value="F:oxidoreductase activity"/>
    <property type="evidence" value="ECO:0007669"/>
    <property type="project" value="UniProtKB-KW"/>
</dbReference>
<dbReference type="GO" id="GO:0015979">
    <property type="term" value="P:photosynthesis"/>
    <property type="evidence" value="ECO:0007669"/>
    <property type="project" value="UniProtKB-UniRule"/>
</dbReference>
<dbReference type="FunFam" id="1.20.1130.10:FF:000001">
    <property type="entry name" value="Photosystem I P700 chlorophyll a apoprotein A2"/>
    <property type="match status" value="1"/>
</dbReference>
<dbReference type="Gene3D" id="1.20.1130.10">
    <property type="entry name" value="Photosystem I PsaA/PsaB"/>
    <property type="match status" value="1"/>
</dbReference>
<dbReference type="HAMAP" id="MF_00482">
    <property type="entry name" value="PSI_PsaB"/>
    <property type="match status" value="1"/>
</dbReference>
<dbReference type="InterPro" id="IPR001280">
    <property type="entry name" value="PSI_PsaA/B"/>
</dbReference>
<dbReference type="InterPro" id="IPR020586">
    <property type="entry name" value="PSI_PsaA/B_CS"/>
</dbReference>
<dbReference type="InterPro" id="IPR036408">
    <property type="entry name" value="PSI_PsaA/B_sf"/>
</dbReference>
<dbReference type="InterPro" id="IPR006244">
    <property type="entry name" value="PSI_PsaB"/>
</dbReference>
<dbReference type="NCBIfam" id="TIGR01336">
    <property type="entry name" value="psaB"/>
    <property type="match status" value="1"/>
</dbReference>
<dbReference type="PANTHER" id="PTHR30128">
    <property type="entry name" value="OUTER MEMBRANE PROTEIN, OMPA-RELATED"/>
    <property type="match status" value="1"/>
</dbReference>
<dbReference type="PANTHER" id="PTHR30128:SF19">
    <property type="entry name" value="PHOTOSYSTEM I P700 CHLOROPHYLL A APOPROTEIN A1-RELATED"/>
    <property type="match status" value="1"/>
</dbReference>
<dbReference type="Pfam" id="PF00223">
    <property type="entry name" value="PsaA_PsaB"/>
    <property type="match status" value="1"/>
</dbReference>
<dbReference type="PIRSF" id="PIRSF002905">
    <property type="entry name" value="PSI_A"/>
    <property type="match status" value="1"/>
</dbReference>
<dbReference type="PRINTS" id="PR00257">
    <property type="entry name" value="PHOTSYSPSAAB"/>
</dbReference>
<dbReference type="SUPFAM" id="SSF81558">
    <property type="entry name" value="Photosystem I subunits PsaA/PsaB"/>
    <property type="match status" value="1"/>
</dbReference>
<dbReference type="PROSITE" id="PS00419">
    <property type="entry name" value="PHOTOSYSTEM_I_PSAAB"/>
    <property type="match status" value="1"/>
</dbReference>
<keyword id="KW-0004">4Fe-4S</keyword>
<keyword id="KW-0148">Chlorophyll</keyword>
<keyword id="KW-0150">Chloroplast</keyword>
<keyword id="KW-0157">Chromophore</keyword>
<keyword id="KW-0249">Electron transport</keyword>
<keyword id="KW-0408">Iron</keyword>
<keyword id="KW-0411">Iron-sulfur</keyword>
<keyword id="KW-0460">Magnesium</keyword>
<keyword id="KW-0472">Membrane</keyword>
<keyword id="KW-0479">Metal-binding</keyword>
<keyword id="KW-0560">Oxidoreductase</keyword>
<keyword id="KW-0602">Photosynthesis</keyword>
<keyword id="KW-0603">Photosystem I</keyword>
<keyword id="KW-0934">Plastid</keyword>
<keyword id="KW-0691">RNA editing</keyword>
<keyword id="KW-0793">Thylakoid</keyword>
<keyword id="KW-0812">Transmembrane</keyword>
<keyword id="KW-1133">Transmembrane helix</keyword>
<keyword id="KW-0813">Transport</keyword>